<organism>
    <name type="scientific">Pseudomonas aeruginosa (strain ATCC 15692 / DSM 22644 / CIP 104116 / JCM 14847 / LMG 12228 / 1C / PRS 101 / PAO1)</name>
    <dbReference type="NCBI Taxonomy" id="208964"/>
    <lineage>
        <taxon>Bacteria</taxon>
        <taxon>Pseudomonadati</taxon>
        <taxon>Pseudomonadota</taxon>
        <taxon>Gammaproteobacteria</taxon>
        <taxon>Pseudomonadales</taxon>
        <taxon>Pseudomonadaceae</taxon>
        <taxon>Pseudomonas</taxon>
    </lineage>
</organism>
<reference key="1">
    <citation type="journal article" date="2000" name="Nature">
        <title>Complete genome sequence of Pseudomonas aeruginosa PAO1, an opportunistic pathogen.</title>
        <authorList>
            <person name="Stover C.K."/>
            <person name="Pham X.-Q.T."/>
            <person name="Erwin A.L."/>
            <person name="Mizoguchi S.D."/>
            <person name="Warrener P."/>
            <person name="Hickey M.J."/>
            <person name="Brinkman F.S.L."/>
            <person name="Hufnagle W.O."/>
            <person name="Kowalik D.J."/>
            <person name="Lagrou M."/>
            <person name="Garber R.L."/>
            <person name="Goltry L."/>
            <person name="Tolentino E."/>
            <person name="Westbrock-Wadman S."/>
            <person name="Yuan Y."/>
            <person name="Brody L.L."/>
            <person name="Coulter S.N."/>
            <person name="Folger K.R."/>
            <person name="Kas A."/>
            <person name="Larbig K."/>
            <person name="Lim R.M."/>
            <person name="Smith K.A."/>
            <person name="Spencer D.H."/>
            <person name="Wong G.K.-S."/>
            <person name="Wu Z."/>
            <person name="Paulsen I.T."/>
            <person name="Reizer J."/>
            <person name="Saier M.H. Jr."/>
            <person name="Hancock R.E.W."/>
            <person name="Lory S."/>
            <person name="Olson M.V."/>
        </authorList>
    </citation>
    <scope>NUCLEOTIDE SEQUENCE [LARGE SCALE GENOMIC DNA]</scope>
    <source>
        <strain>ATCC 15692 / DSM 22644 / CIP 104116 / JCM 14847 / LMG 12228 / 1C / PRS 101 / PAO1</strain>
    </source>
</reference>
<name>KDPB_PSEAE</name>
<sequence length="690" mass="72990">MNAQTQASKNALHKSLERRHNASTSLAALWRPALLQAFVKLDPRQLLRSPVMLVVELTAVLTTLLCFVPDQAVPTSVALQIALWLWFTVLFANFAEALAEGRGKARADSLKAGSQGLSANKRRADGSFESVVASSLRKGDVVRVQAGEMIPGDGEVIEGVAAVNEAAITGESAPVIRESGGDRSAVTGNTQVVSDWLLVRIGANPGESTLDRMIALVEGAKRQKTPNEVALDILLIGLTLIFLLVVVTLKPFALFAGGNLPLVFLVALLVTLIPTTIGGLLSAIGIAGMDRLVRLNVIAKSGRAVEAAGDVHVLLLDKTGTITFGNRRCSALYAAPGVSGKELAEGALLASLADDTPEGKSIVEYLRILHPIEEPRREELTPIAFSAETRLSGVDWNGQVYRKGAVDAALRFIDLPREKMPEVLSREVDKIAQSGGTPLLVVANGRLLGAIHLKDVVKPGIRERFAELRRLGIRTVMVTGDNPLTAAAIAAEAGVDDVIAEATPEKKLARIRQEQGEGRLVAMCGDGANDAPALAQADVGMAMNDGTQAAREAANLVDLDSDPTKLLDVVQVGKELLVTRGALTTFSIANDVAKYFAILPALFVGIYPQLDVLNVMRLQSPQSAILSAIVFNALIIVALIPLALRGVRVQAADASQLLQRNLLIYGVGGLVAPFLGIKAIDLLLTAVGLA</sequence>
<evidence type="ECO:0000255" key="1">
    <source>
        <dbReference type="HAMAP-Rule" id="MF_00285"/>
    </source>
</evidence>
<comment type="function">
    <text evidence="1">Part of the high-affinity ATP-driven potassium transport (or Kdp) system, which catalyzes the hydrolysis of ATP coupled with the electrogenic transport of potassium into the cytoplasm. This subunit is responsible for energy coupling to the transport system and for the release of the potassium ions to the cytoplasm.</text>
</comment>
<comment type="catalytic activity">
    <reaction evidence="1">
        <text>K(+)(out) + ATP + H2O = K(+)(in) + ADP + phosphate + H(+)</text>
        <dbReference type="Rhea" id="RHEA:16777"/>
        <dbReference type="ChEBI" id="CHEBI:15377"/>
        <dbReference type="ChEBI" id="CHEBI:15378"/>
        <dbReference type="ChEBI" id="CHEBI:29103"/>
        <dbReference type="ChEBI" id="CHEBI:30616"/>
        <dbReference type="ChEBI" id="CHEBI:43474"/>
        <dbReference type="ChEBI" id="CHEBI:456216"/>
        <dbReference type="EC" id="7.2.2.6"/>
    </reaction>
    <physiologicalReaction direction="left-to-right" evidence="1">
        <dbReference type="Rhea" id="RHEA:16778"/>
    </physiologicalReaction>
</comment>
<comment type="subunit">
    <text evidence="1">The system is composed of three essential subunits: KdpA, KdpB and KdpC.</text>
</comment>
<comment type="subcellular location">
    <subcellularLocation>
        <location evidence="1">Cell inner membrane</location>
        <topology evidence="1">Multi-pass membrane protein</topology>
    </subcellularLocation>
</comment>
<comment type="similarity">
    <text evidence="1">Belongs to the cation transport ATPase (P-type) (TC 3.A.3) family. Type IA subfamily.</text>
</comment>
<accession>P57698</accession>
<proteinExistence type="inferred from homology"/>
<keyword id="KW-0067">ATP-binding</keyword>
<keyword id="KW-0997">Cell inner membrane</keyword>
<keyword id="KW-1003">Cell membrane</keyword>
<keyword id="KW-0406">Ion transport</keyword>
<keyword id="KW-0460">Magnesium</keyword>
<keyword id="KW-0472">Membrane</keyword>
<keyword id="KW-0479">Metal-binding</keyword>
<keyword id="KW-0547">Nucleotide-binding</keyword>
<keyword id="KW-0597">Phosphoprotein</keyword>
<keyword id="KW-0630">Potassium</keyword>
<keyword id="KW-0633">Potassium transport</keyword>
<keyword id="KW-1185">Reference proteome</keyword>
<keyword id="KW-1278">Translocase</keyword>
<keyword id="KW-0812">Transmembrane</keyword>
<keyword id="KW-1133">Transmembrane helix</keyword>
<keyword id="KW-0813">Transport</keyword>
<feature type="chain" id="PRO_0000046128" description="Potassium-transporting ATPase ATP-binding subunit">
    <location>
        <begin position="1"/>
        <end position="690"/>
    </location>
</feature>
<feature type="transmembrane region" description="Helical" evidence="1">
    <location>
        <begin position="49"/>
        <end position="69"/>
    </location>
</feature>
<feature type="transmembrane region" description="Helical" evidence="1">
    <location>
        <begin position="72"/>
        <end position="92"/>
    </location>
</feature>
<feature type="transmembrane region" description="Helical" evidence="1">
    <location>
        <begin position="229"/>
        <end position="249"/>
    </location>
</feature>
<feature type="transmembrane region" description="Helical" evidence="1">
    <location>
        <begin position="253"/>
        <end position="273"/>
    </location>
</feature>
<feature type="transmembrane region" description="Helical" evidence="1">
    <location>
        <begin position="596"/>
        <end position="616"/>
    </location>
</feature>
<feature type="transmembrane region" description="Helical" evidence="1">
    <location>
        <begin position="624"/>
        <end position="644"/>
    </location>
</feature>
<feature type="transmembrane region" description="Helical" evidence="1">
    <location>
        <begin position="662"/>
        <end position="682"/>
    </location>
</feature>
<feature type="active site" description="4-aspartylphosphate intermediate" evidence="1">
    <location>
        <position position="317"/>
    </location>
</feature>
<feature type="binding site" evidence="1">
    <location>
        <position position="354"/>
    </location>
    <ligand>
        <name>ATP</name>
        <dbReference type="ChEBI" id="CHEBI:30616"/>
    </ligand>
</feature>
<feature type="binding site" evidence="1">
    <location>
        <position position="358"/>
    </location>
    <ligand>
        <name>ATP</name>
        <dbReference type="ChEBI" id="CHEBI:30616"/>
    </ligand>
</feature>
<feature type="binding site" evidence="1">
    <location>
        <begin position="385"/>
        <end position="392"/>
    </location>
    <ligand>
        <name>ATP</name>
        <dbReference type="ChEBI" id="CHEBI:30616"/>
    </ligand>
</feature>
<feature type="binding site" evidence="1">
    <location>
        <position position="403"/>
    </location>
    <ligand>
        <name>ATP</name>
        <dbReference type="ChEBI" id="CHEBI:30616"/>
    </ligand>
</feature>
<feature type="binding site" evidence="1">
    <location>
        <position position="526"/>
    </location>
    <ligand>
        <name>Mg(2+)</name>
        <dbReference type="ChEBI" id="CHEBI:18420"/>
    </ligand>
</feature>
<feature type="binding site" evidence="1">
    <location>
        <position position="530"/>
    </location>
    <ligand>
        <name>Mg(2+)</name>
        <dbReference type="ChEBI" id="CHEBI:18420"/>
    </ligand>
</feature>
<dbReference type="EC" id="7.2.2.6" evidence="1"/>
<dbReference type="EMBL" id="AE004091">
    <property type="protein sequence ID" value="AAG05023.1"/>
    <property type="molecule type" value="Genomic_DNA"/>
</dbReference>
<dbReference type="PIR" id="A83441">
    <property type="entry name" value="A83441"/>
</dbReference>
<dbReference type="RefSeq" id="NP_250325.1">
    <property type="nucleotide sequence ID" value="NC_002516.2"/>
</dbReference>
<dbReference type="RefSeq" id="WP_003097844.1">
    <property type="nucleotide sequence ID" value="NZ_QZGE01000003.1"/>
</dbReference>
<dbReference type="SMR" id="P57698"/>
<dbReference type="FunCoup" id="P57698">
    <property type="interactions" value="341"/>
</dbReference>
<dbReference type="STRING" id="208964.PA1634"/>
<dbReference type="PaxDb" id="208964-PA1634"/>
<dbReference type="DNASU" id="883011"/>
<dbReference type="GeneID" id="883011"/>
<dbReference type="KEGG" id="pae:PA1634"/>
<dbReference type="PATRIC" id="fig|208964.12.peg.1694"/>
<dbReference type="PseudoCAP" id="PA1634"/>
<dbReference type="HOGENOM" id="CLU_025728_2_0_6"/>
<dbReference type="InParanoid" id="P57698"/>
<dbReference type="OrthoDB" id="9814270at2"/>
<dbReference type="PhylomeDB" id="P57698"/>
<dbReference type="BioCyc" id="PAER208964:G1FZ6-1664-MONOMER"/>
<dbReference type="PHI-base" id="PHI:4712"/>
<dbReference type="Proteomes" id="UP000002438">
    <property type="component" value="Chromosome"/>
</dbReference>
<dbReference type="GO" id="GO:0005886">
    <property type="term" value="C:plasma membrane"/>
    <property type="evidence" value="ECO:0000318"/>
    <property type="project" value="GO_Central"/>
</dbReference>
<dbReference type="GO" id="GO:0031004">
    <property type="term" value="C:potassium ion-transporting ATPase complex"/>
    <property type="evidence" value="ECO:0000318"/>
    <property type="project" value="GO_Central"/>
</dbReference>
<dbReference type="GO" id="GO:1903103">
    <property type="term" value="C:potassium:proton antiporter complex"/>
    <property type="evidence" value="ECO:0000318"/>
    <property type="project" value="GO_Central"/>
</dbReference>
<dbReference type="GO" id="GO:0005524">
    <property type="term" value="F:ATP binding"/>
    <property type="evidence" value="ECO:0007669"/>
    <property type="project" value="UniProtKB-UniRule"/>
</dbReference>
<dbReference type="GO" id="GO:0016887">
    <property type="term" value="F:ATP hydrolysis activity"/>
    <property type="evidence" value="ECO:0007669"/>
    <property type="project" value="InterPro"/>
</dbReference>
<dbReference type="GO" id="GO:0000287">
    <property type="term" value="F:magnesium ion binding"/>
    <property type="evidence" value="ECO:0007669"/>
    <property type="project" value="UniProtKB-UniRule"/>
</dbReference>
<dbReference type="GO" id="GO:0008556">
    <property type="term" value="F:P-type potassium transmembrane transporter activity"/>
    <property type="evidence" value="ECO:0000318"/>
    <property type="project" value="GO_Central"/>
</dbReference>
<dbReference type="GO" id="GO:0071805">
    <property type="term" value="P:potassium ion transmembrane transport"/>
    <property type="evidence" value="ECO:0000318"/>
    <property type="project" value="GO_Central"/>
</dbReference>
<dbReference type="FunFam" id="2.70.150.10:FF:000010">
    <property type="entry name" value="Potassium-transporting ATPase ATP-binding subunit"/>
    <property type="match status" value="1"/>
</dbReference>
<dbReference type="Gene3D" id="3.40.1110.10">
    <property type="entry name" value="Calcium-transporting ATPase, cytoplasmic domain N"/>
    <property type="match status" value="1"/>
</dbReference>
<dbReference type="Gene3D" id="2.70.150.10">
    <property type="entry name" value="Calcium-transporting ATPase, cytoplasmic transduction domain A"/>
    <property type="match status" value="1"/>
</dbReference>
<dbReference type="Gene3D" id="3.40.50.1000">
    <property type="entry name" value="HAD superfamily/HAD-like"/>
    <property type="match status" value="1"/>
</dbReference>
<dbReference type="HAMAP" id="MF_00285">
    <property type="entry name" value="KdpB"/>
    <property type="match status" value="1"/>
</dbReference>
<dbReference type="InterPro" id="IPR023299">
    <property type="entry name" value="ATPase_P-typ_cyto_dom_N"/>
</dbReference>
<dbReference type="InterPro" id="IPR018303">
    <property type="entry name" value="ATPase_P-typ_P_site"/>
</dbReference>
<dbReference type="InterPro" id="IPR023298">
    <property type="entry name" value="ATPase_P-typ_TM_dom_sf"/>
</dbReference>
<dbReference type="InterPro" id="IPR008250">
    <property type="entry name" value="ATPase_P-typ_transduc_dom_A_sf"/>
</dbReference>
<dbReference type="InterPro" id="IPR036412">
    <property type="entry name" value="HAD-like_sf"/>
</dbReference>
<dbReference type="InterPro" id="IPR023214">
    <property type="entry name" value="HAD_sf"/>
</dbReference>
<dbReference type="InterPro" id="IPR006391">
    <property type="entry name" value="P-type_ATPase_bsu_IA"/>
</dbReference>
<dbReference type="InterPro" id="IPR001757">
    <property type="entry name" value="P_typ_ATPase"/>
</dbReference>
<dbReference type="InterPro" id="IPR044492">
    <property type="entry name" value="P_typ_ATPase_HD_dom"/>
</dbReference>
<dbReference type="NCBIfam" id="TIGR01494">
    <property type="entry name" value="ATPase_P-type"/>
    <property type="match status" value="2"/>
</dbReference>
<dbReference type="NCBIfam" id="TIGR01497">
    <property type="entry name" value="kdpB"/>
    <property type="match status" value="1"/>
</dbReference>
<dbReference type="PANTHER" id="PTHR43743">
    <property type="entry name" value="POTASSIUM-TRANSPORTING ATPASE ATP-BINDING SUBUNIT"/>
    <property type="match status" value="1"/>
</dbReference>
<dbReference type="PANTHER" id="PTHR43743:SF1">
    <property type="entry name" value="POTASSIUM-TRANSPORTING ATPASE ATP-BINDING SUBUNIT"/>
    <property type="match status" value="1"/>
</dbReference>
<dbReference type="Pfam" id="PF00122">
    <property type="entry name" value="E1-E2_ATPase"/>
    <property type="match status" value="1"/>
</dbReference>
<dbReference type="Pfam" id="PF00702">
    <property type="entry name" value="Hydrolase"/>
    <property type="match status" value="1"/>
</dbReference>
<dbReference type="PRINTS" id="PR00119">
    <property type="entry name" value="CATATPASE"/>
</dbReference>
<dbReference type="SFLD" id="SFLDS00003">
    <property type="entry name" value="Haloacid_Dehalogenase"/>
    <property type="match status" value="1"/>
</dbReference>
<dbReference type="SFLD" id="SFLDF00027">
    <property type="entry name" value="p-type_atpase"/>
    <property type="match status" value="1"/>
</dbReference>
<dbReference type="SUPFAM" id="SSF81653">
    <property type="entry name" value="Calcium ATPase, transduction domain A"/>
    <property type="match status" value="1"/>
</dbReference>
<dbReference type="SUPFAM" id="SSF81665">
    <property type="entry name" value="Calcium ATPase, transmembrane domain M"/>
    <property type="match status" value="1"/>
</dbReference>
<dbReference type="SUPFAM" id="SSF56784">
    <property type="entry name" value="HAD-like"/>
    <property type="match status" value="1"/>
</dbReference>
<dbReference type="PROSITE" id="PS00154">
    <property type="entry name" value="ATPASE_E1_E2"/>
    <property type="match status" value="1"/>
</dbReference>
<gene>
    <name evidence="1" type="primary">kdpB</name>
    <name type="ordered locus">PA1634</name>
</gene>
<protein>
    <recommendedName>
        <fullName evidence="1">Potassium-transporting ATPase ATP-binding subunit</fullName>
        <ecNumber evidence="1">7.2.2.6</ecNumber>
    </recommendedName>
    <alternativeName>
        <fullName evidence="1">ATP phosphohydrolase [potassium-transporting] B chain</fullName>
    </alternativeName>
    <alternativeName>
        <fullName evidence="1">Potassium-binding and translocating subunit B</fullName>
    </alternativeName>
    <alternativeName>
        <fullName evidence="1">Potassium-translocating ATPase B chain</fullName>
    </alternativeName>
</protein>